<accession>Q73ZQ6</accession>
<evidence type="ECO:0000255" key="1">
    <source>
        <dbReference type="HAMAP-Rule" id="MF_00711"/>
    </source>
</evidence>
<proteinExistence type="inferred from homology"/>
<reference key="1">
    <citation type="journal article" date="2005" name="Proc. Natl. Acad. Sci. U.S.A.">
        <title>The complete genome sequence of Mycobacterium avium subspecies paratuberculosis.</title>
        <authorList>
            <person name="Li L."/>
            <person name="Bannantine J.P."/>
            <person name="Zhang Q."/>
            <person name="Amonsin A."/>
            <person name="May B.J."/>
            <person name="Alt D."/>
            <person name="Banerji N."/>
            <person name="Kanjilal S."/>
            <person name="Kapur V."/>
        </authorList>
    </citation>
    <scope>NUCLEOTIDE SEQUENCE [LARGE SCALE GENOMIC DNA]</scope>
    <source>
        <strain>ATCC BAA-968 / K-10</strain>
    </source>
</reference>
<comment type="function">
    <text evidence="1">The glycine cleavage system catalyzes the degradation of glycine. The P protein binds the alpha-amino group of glycine through its pyridoxal phosphate cofactor; CO(2) is released and the remaining methylamine moiety is then transferred to the lipoamide cofactor of the H protein.</text>
</comment>
<comment type="catalytic activity">
    <reaction evidence="1">
        <text>N(6)-[(R)-lipoyl]-L-lysyl-[glycine-cleavage complex H protein] + glycine + H(+) = N(6)-[(R)-S(8)-aminomethyldihydrolipoyl]-L-lysyl-[glycine-cleavage complex H protein] + CO2</text>
        <dbReference type="Rhea" id="RHEA:24304"/>
        <dbReference type="Rhea" id="RHEA-COMP:10494"/>
        <dbReference type="Rhea" id="RHEA-COMP:10495"/>
        <dbReference type="ChEBI" id="CHEBI:15378"/>
        <dbReference type="ChEBI" id="CHEBI:16526"/>
        <dbReference type="ChEBI" id="CHEBI:57305"/>
        <dbReference type="ChEBI" id="CHEBI:83099"/>
        <dbReference type="ChEBI" id="CHEBI:83143"/>
        <dbReference type="EC" id="1.4.4.2"/>
    </reaction>
</comment>
<comment type="cofactor">
    <cofactor evidence="1">
        <name>pyridoxal 5'-phosphate</name>
        <dbReference type="ChEBI" id="CHEBI:597326"/>
    </cofactor>
</comment>
<comment type="subunit">
    <text evidence="1">The glycine cleavage system is composed of four proteins: P, T, L and H.</text>
</comment>
<comment type="similarity">
    <text evidence="1">Belongs to the GcvP family.</text>
</comment>
<protein>
    <recommendedName>
        <fullName evidence="1">Glycine dehydrogenase (decarboxylating)</fullName>
        <ecNumber evidence="1">1.4.4.2</ecNumber>
    </recommendedName>
    <alternativeName>
        <fullName evidence="1">Glycine cleavage system P-protein</fullName>
    </alternativeName>
    <alternativeName>
        <fullName evidence="1">Glycine decarboxylase</fullName>
    </alternativeName>
    <alternativeName>
        <fullName evidence="1">Glycine dehydrogenase (aminomethyl-transferring)</fullName>
    </alternativeName>
</protein>
<feature type="chain" id="PRO_0000227107" description="Glycine dehydrogenase (decarboxylating)">
    <location>
        <begin position="1"/>
        <end position="941"/>
    </location>
</feature>
<feature type="modified residue" description="N6-(pyridoxal phosphate)lysine" evidence="1">
    <location>
        <position position="692"/>
    </location>
</feature>
<dbReference type="EC" id="1.4.4.2" evidence="1"/>
<dbReference type="EMBL" id="AE016958">
    <property type="protein sequence ID" value="AAS03862.1"/>
    <property type="molecule type" value="Genomic_DNA"/>
</dbReference>
<dbReference type="RefSeq" id="WP_010949258.1">
    <property type="nucleotide sequence ID" value="NZ_CP106873.1"/>
</dbReference>
<dbReference type="SMR" id="Q73ZQ6"/>
<dbReference type="STRING" id="262316.MAP_1545"/>
<dbReference type="KEGG" id="mpa:MAP_1545"/>
<dbReference type="PATRIC" id="fig|262316.17.peg.1636"/>
<dbReference type="eggNOG" id="COG0403">
    <property type="taxonomic scope" value="Bacteria"/>
</dbReference>
<dbReference type="eggNOG" id="COG1003">
    <property type="taxonomic scope" value="Bacteria"/>
</dbReference>
<dbReference type="HOGENOM" id="CLU_004620_3_2_11"/>
<dbReference type="Proteomes" id="UP000000580">
    <property type="component" value="Chromosome"/>
</dbReference>
<dbReference type="GO" id="GO:0005829">
    <property type="term" value="C:cytosol"/>
    <property type="evidence" value="ECO:0007669"/>
    <property type="project" value="TreeGrafter"/>
</dbReference>
<dbReference type="GO" id="GO:0005960">
    <property type="term" value="C:glycine cleavage complex"/>
    <property type="evidence" value="ECO:0007669"/>
    <property type="project" value="TreeGrafter"/>
</dbReference>
<dbReference type="GO" id="GO:0016594">
    <property type="term" value="F:glycine binding"/>
    <property type="evidence" value="ECO:0007669"/>
    <property type="project" value="TreeGrafter"/>
</dbReference>
<dbReference type="GO" id="GO:0004375">
    <property type="term" value="F:glycine dehydrogenase (decarboxylating) activity"/>
    <property type="evidence" value="ECO:0007669"/>
    <property type="project" value="UniProtKB-EC"/>
</dbReference>
<dbReference type="GO" id="GO:0030170">
    <property type="term" value="F:pyridoxal phosphate binding"/>
    <property type="evidence" value="ECO:0007669"/>
    <property type="project" value="TreeGrafter"/>
</dbReference>
<dbReference type="GO" id="GO:0019464">
    <property type="term" value="P:glycine decarboxylation via glycine cleavage system"/>
    <property type="evidence" value="ECO:0007669"/>
    <property type="project" value="UniProtKB-UniRule"/>
</dbReference>
<dbReference type="CDD" id="cd00613">
    <property type="entry name" value="GDC-P"/>
    <property type="match status" value="2"/>
</dbReference>
<dbReference type="FunFam" id="3.90.1150.10:FF:000059">
    <property type="entry name" value="Glycine dehydrogenase (decarboxylating)"/>
    <property type="match status" value="1"/>
</dbReference>
<dbReference type="FunFam" id="3.40.640.10:FF:000005">
    <property type="entry name" value="Glycine dehydrogenase (decarboxylating), mitochondrial"/>
    <property type="match status" value="1"/>
</dbReference>
<dbReference type="FunFam" id="3.40.640.10:FF:000007">
    <property type="entry name" value="glycine dehydrogenase (Decarboxylating), mitochondrial"/>
    <property type="match status" value="1"/>
</dbReference>
<dbReference type="Gene3D" id="3.90.1150.10">
    <property type="entry name" value="Aspartate Aminotransferase, domain 1"/>
    <property type="match status" value="2"/>
</dbReference>
<dbReference type="Gene3D" id="3.40.640.10">
    <property type="entry name" value="Type I PLP-dependent aspartate aminotransferase-like (Major domain)"/>
    <property type="match status" value="2"/>
</dbReference>
<dbReference type="HAMAP" id="MF_00711">
    <property type="entry name" value="GcvP"/>
    <property type="match status" value="1"/>
</dbReference>
<dbReference type="InterPro" id="IPR003437">
    <property type="entry name" value="GcvP"/>
</dbReference>
<dbReference type="InterPro" id="IPR049316">
    <property type="entry name" value="GDC-P_C"/>
</dbReference>
<dbReference type="InterPro" id="IPR049315">
    <property type="entry name" value="GDC-P_N"/>
</dbReference>
<dbReference type="InterPro" id="IPR020581">
    <property type="entry name" value="GDC_P"/>
</dbReference>
<dbReference type="InterPro" id="IPR015424">
    <property type="entry name" value="PyrdxlP-dep_Trfase"/>
</dbReference>
<dbReference type="InterPro" id="IPR015421">
    <property type="entry name" value="PyrdxlP-dep_Trfase_major"/>
</dbReference>
<dbReference type="InterPro" id="IPR015422">
    <property type="entry name" value="PyrdxlP-dep_Trfase_small"/>
</dbReference>
<dbReference type="NCBIfam" id="TIGR00461">
    <property type="entry name" value="gcvP"/>
    <property type="match status" value="1"/>
</dbReference>
<dbReference type="PANTHER" id="PTHR11773:SF1">
    <property type="entry name" value="GLYCINE DEHYDROGENASE (DECARBOXYLATING), MITOCHONDRIAL"/>
    <property type="match status" value="1"/>
</dbReference>
<dbReference type="PANTHER" id="PTHR11773">
    <property type="entry name" value="GLYCINE DEHYDROGENASE, DECARBOXYLATING"/>
    <property type="match status" value="1"/>
</dbReference>
<dbReference type="Pfam" id="PF21478">
    <property type="entry name" value="GcvP2_C"/>
    <property type="match status" value="1"/>
</dbReference>
<dbReference type="Pfam" id="PF02347">
    <property type="entry name" value="GDC-P"/>
    <property type="match status" value="2"/>
</dbReference>
<dbReference type="SUPFAM" id="SSF53383">
    <property type="entry name" value="PLP-dependent transferases"/>
    <property type="match status" value="2"/>
</dbReference>
<keyword id="KW-0560">Oxidoreductase</keyword>
<keyword id="KW-0663">Pyridoxal phosphate</keyword>
<keyword id="KW-1185">Reference proteome</keyword>
<gene>
    <name evidence="1" type="primary">gcvP</name>
    <name type="ordered locus">MAP_1545</name>
</gene>
<sequence>MPDHTTFAARHIGPDPQAVAAMLDVIGVGSLDELAAKAVPAGIRDRLSADGIAPGLDRLPPPASETEALAELRGLAEANTVAVSMIGQGYYDTLTPPVLLRNILENPAWYTAYTPYQPEISQGRLEALLNFQTMVADLTGLEIANASMLDEGTAAAEAMTLMRRASRGKSNRLAVDADVFAQTAAIVATRARPLGIEIVTADLRDGLPDGDFFGVIAQLPGASGAITDWAALVAQAHERGALVALGADLLALTLITPPGEIGADVAFGTTQRFGVPMGFGGPHAGYLAVHANHARQLPGRLVGVSLDADGSPAYRLALQTREQHIRRDKATSNICTAQVLLAVMAAMYASYHGAEGLTAIARRVHGHAEAIAAALGTAVVHDRYFDTVLARVPGRADEVIAAAKARGINLWRVDDDHVSVACDEATTDEHVAAVLEAFGVAPAEPVASEIATRTAEFLTHPAFTQYRTETAMMRYLRTLADKDIALDRSMIPLGSCTMKLNAAAEMEPITWPEFARQHPFAPASDTPGLRRLIGDLENWLVAITGYDAVSLQPNAGSQGEYAGLLAIHDYHASRGEPHRDICLIPSSAHGTNAASAALAGMRVVVVGCHDNGDVDLDDLRAKVTEHRDRLSTLMITYPSTHGVYEHDIAEICAAVHDAGGQVYVDGANLNALVGLARPGKFGGDVSHLNLHKTFCIPHGGGGPGVGPVAVRSHLAPFLPGHPHAPELPQGHPVSSAPYGSASILPISWAYIRMMGADGLRAASLTAITSANYIARRLDEYFPVLYTGENGMVAHECILDLRPITKATGVTVDDVAKRLADYGFHAPTMSFPVAGTLMVEPTESETLTEVDAFCDAMIAIRGEIDRVGAGEWPVEDNPLRGAPHTAECLVTTDWDHPYSREQAAYPLGKDFRPKVWPPVRRIDGAYGDRNLVCSCPPVEAFA</sequence>
<name>GCSP_MYCPA</name>
<organism>
    <name type="scientific">Mycolicibacterium paratuberculosis (strain ATCC BAA-968 / K-10)</name>
    <name type="common">Mycobacterium paratuberculosis</name>
    <dbReference type="NCBI Taxonomy" id="262316"/>
    <lineage>
        <taxon>Bacteria</taxon>
        <taxon>Bacillati</taxon>
        <taxon>Actinomycetota</taxon>
        <taxon>Actinomycetes</taxon>
        <taxon>Mycobacteriales</taxon>
        <taxon>Mycobacteriaceae</taxon>
        <taxon>Mycobacterium</taxon>
        <taxon>Mycobacterium avium complex (MAC)</taxon>
    </lineage>
</organism>